<sequence>MRVRNKPWAKGYMADHLDRLVVEPEPLKGNWQSRFPSNQPLFVEIGTGKGQFIIEMARQHPDRNFIGIEIQTSVIAVALKGVVNSGLTNIQLVHTDGEAINTFFEAGEVSGLYLNFSDPWPKKRHTKRRLTSPVFLAHYADVLQPEGQLQFKTDNRGLFEYSLGSLNNFGMVFEGVWLDLHAATDGVEDIQTEYEQKFSKKGPIYQVIAHFPTNN</sequence>
<gene>
    <name evidence="2" type="primary">trmB</name>
    <name type="ordered locus">LVIS_1478</name>
</gene>
<feature type="chain" id="PRO_0000288161" description="tRNA (guanine-N(7)-)-methyltransferase">
    <location>
        <begin position="1"/>
        <end position="215"/>
    </location>
</feature>
<feature type="active site" evidence="1">
    <location>
        <position position="118"/>
    </location>
</feature>
<feature type="binding site" evidence="2">
    <location>
        <position position="44"/>
    </location>
    <ligand>
        <name>S-adenosyl-L-methionine</name>
        <dbReference type="ChEBI" id="CHEBI:59789"/>
    </ligand>
</feature>
<feature type="binding site" evidence="2">
    <location>
        <position position="69"/>
    </location>
    <ligand>
        <name>S-adenosyl-L-methionine</name>
        <dbReference type="ChEBI" id="CHEBI:59789"/>
    </ligand>
</feature>
<feature type="binding site" evidence="2">
    <location>
        <position position="96"/>
    </location>
    <ligand>
        <name>S-adenosyl-L-methionine</name>
        <dbReference type="ChEBI" id="CHEBI:59789"/>
    </ligand>
</feature>
<feature type="binding site" evidence="2">
    <location>
        <position position="118"/>
    </location>
    <ligand>
        <name>S-adenosyl-L-methionine</name>
        <dbReference type="ChEBI" id="CHEBI:59789"/>
    </ligand>
</feature>
<feature type="binding site" evidence="2">
    <location>
        <position position="122"/>
    </location>
    <ligand>
        <name>substrate</name>
    </ligand>
</feature>
<feature type="binding site" evidence="2">
    <location>
        <position position="154"/>
    </location>
    <ligand>
        <name>substrate</name>
    </ligand>
</feature>
<feature type="binding site" evidence="2">
    <location>
        <begin position="192"/>
        <end position="195"/>
    </location>
    <ligand>
        <name>substrate</name>
    </ligand>
</feature>
<protein>
    <recommendedName>
        <fullName evidence="2">tRNA (guanine-N(7)-)-methyltransferase</fullName>
        <ecNumber evidence="2">2.1.1.33</ecNumber>
    </recommendedName>
    <alternativeName>
        <fullName evidence="2">tRNA (guanine(46)-N(7))-methyltransferase</fullName>
    </alternativeName>
    <alternativeName>
        <fullName evidence="2">tRNA(m7G46)-methyltransferase</fullName>
    </alternativeName>
</protein>
<dbReference type="EC" id="2.1.1.33" evidence="2"/>
<dbReference type="EMBL" id="CP000416">
    <property type="protein sequence ID" value="ABJ64575.1"/>
    <property type="molecule type" value="Genomic_DNA"/>
</dbReference>
<dbReference type="RefSeq" id="WP_011668203.1">
    <property type="nucleotide sequence ID" value="NC_008497.1"/>
</dbReference>
<dbReference type="SMR" id="Q03QE7"/>
<dbReference type="STRING" id="387344.LVIS_1478"/>
<dbReference type="KEGG" id="lbr:LVIS_1478"/>
<dbReference type="PATRIC" id="fig|387344.15.peg.1413"/>
<dbReference type="eggNOG" id="COG0220">
    <property type="taxonomic scope" value="Bacteria"/>
</dbReference>
<dbReference type="HOGENOM" id="CLU_050910_2_1_9"/>
<dbReference type="UniPathway" id="UPA00989"/>
<dbReference type="Proteomes" id="UP000001652">
    <property type="component" value="Chromosome"/>
</dbReference>
<dbReference type="GO" id="GO:0043527">
    <property type="term" value="C:tRNA methyltransferase complex"/>
    <property type="evidence" value="ECO:0007669"/>
    <property type="project" value="TreeGrafter"/>
</dbReference>
<dbReference type="GO" id="GO:0008176">
    <property type="term" value="F:tRNA (guanine(46)-N7)-methyltransferase activity"/>
    <property type="evidence" value="ECO:0007669"/>
    <property type="project" value="UniProtKB-UniRule"/>
</dbReference>
<dbReference type="CDD" id="cd02440">
    <property type="entry name" value="AdoMet_MTases"/>
    <property type="match status" value="1"/>
</dbReference>
<dbReference type="FunFam" id="3.40.50.150:FF:000035">
    <property type="entry name" value="tRNA (guanine-N(7)-)-methyltransferase"/>
    <property type="match status" value="1"/>
</dbReference>
<dbReference type="Gene3D" id="3.40.50.150">
    <property type="entry name" value="Vaccinia Virus protein VP39"/>
    <property type="match status" value="1"/>
</dbReference>
<dbReference type="HAMAP" id="MF_01057">
    <property type="entry name" value="tRNA_methyltr_TrmB"/>
    <property type="match status" value="1"/>
</dbReference>
<dbReference type="InterPro" id="IPR029063">
    <property type="entry name" value="SAM-dependent_MTases_sf"/>
</dbReference>
<dbReference type="InterPro" id="IPR003358">
    <property type="entry name" value="tRNA_(Gua-N-7)_MeTrfase_Trmb"/>
</dbReference>
<dbReference type="InterPro" id="IPR055361">
    <property type="entry name" value="tRNA_methyltr_TrmB_bact"/>
</dbReference>
<dbReference type="NCBIfam" id="NF001080">
    <property type="entry name" value="PRK00121.2-2"/>
    <property type="match status" value="1"/>
</dbReference>
<dbReference type="NCBIfam" id="TIGR00091">
    <property type="entry name" value="tRNA (guanosine(46)-N7)-methyltransferase TrmB"/>
    <property type="match status" value="1"/>
</dbReference>
<dbReference type="PANTHER" id="PTHR23417">
    <property type="entry name" value="3-DEOXY-D-MANNO-OCTULOSONIC-ACID TRANSFERASE/TRNA GUANINE-N 7 - -METHYLTRANSFERASE"/>
    <property type="match status" value="1"/>
</dbReference>
<dbReference type="PANTHER" id="PTHR23417:SF14">
    <property type="entry name" value="PENTACOTRIPEPTIDE-REPEAT REGION OF PRORP DOMAIN-CONTAINING PROTEIN"/>
    <property type="match status" value="1"/>
</dbReference>
<dbReference type="Pfam" id="PF02390">
    <property type="entry name" value="Methyltransf_4"/>
    <property type="match status" value="1"/>
</dbReference>
<dbReference type="SUPFAM" id="SSF53335">
    <property type="entry name" value="S-adenosyl-L-methionine-dependent methyltransferases"/>
    <property type="match status" value="1"/>
</dbReference>
<dbReference type="PROSITE" id="PS51625">
    <property type="entry name" value="SAM_MT_TRMB"/>
    <property type="match status" value="1"/>
</dbReference>
<comment type="function">
    <text evidence="2">Catalyzes the formation of N(7)-methylguanine at position 46 (m7G46) in tRNA.</text>
</comment>
<comment type="catalytic activity">
    <reaction evidence="2">
        <text>guanosine(46) in tRNA + S-adenosyl-L-methionine = N(7)-methylguanosine(46) in tRNA + S-adenosyl-L-homocysteine</text>
        <dbReference type="Rhea" id="RHEA:42708"/>
        <dbReference type="Rhea" id="RHEA-COMP:10188"/>
        <dbReference type="Rhea" id="RHEA-COMP:10189"/>
        <dbReference type="ChEBI" id="CHEBI:57856"/>
        <dbReference type="ChEBI" id="CHEBI:59789"/>
        <dbReference type="ChEBI" id="CHEBI:74269"/>
        <dbReference type="ChEBI" id="CHEBI:74480"/>
        <dbReference type="EC" id="2.1.1.33"/>
    </reaction>
</comment>
<comment type="pathway">
    <text evidence="2">tRNA modification; N(7)-methylguanine-tRNA biosynthesis.</text>
</comment>
<comment type="similarity">
    <text evidence="2">Belongs to the class I-like SAM-binding methyltransferase superfamily. TrmB family.</text>
</comment>
<keyword id="KW-0489">Methyltransferase</keyword>
<keyword id="KW-1185">Reference proteome</keyword>
<keyword id="KW-0949">S-adenosyl-L-methionine</keyword>
<keyword id="KW-0808">Transferase</keyword>
<keyword id="KW-0819">tRNA processing</keyword>
<organism>
    <name type="scientific">Levilactobacillus brevis (strain ATCC 367 / BCRC 12310 / CIP 105137 / JCM 1170 / LMG 11437 / NCIMB 947 / NCTC 947)</name>
    <name type="common">Lactobacillus brevis</name>
    <dbReference type="NCBI Taxonomy" id="387344"/>
    <lineage>
        <taxon>Bacteria</taxon>
        <taxon>Bacillati</taxon>
        <taxon>Bacillota</taxon>
        <taxon>Bacilli</taxon>
        <taxon>Lactobacillales</taxon>
        <taxon>Lactobacillaceae</taxon>
        <taxon>Levilactobacillus</taxon>
    </lineage>
</organism>
<evidence type="ECO:0000250" key="1"/>
<evidence type="ECO:0000255" key="2">
    <source>
        <dbReference type="HAMAP-Rule" id="MF_01057"/>
    </source>
</evidence>
<name>TRMB_LEVBA</name>
<proteinExistence type="inferred from homology"/>
<accession>Q03QE7</accession>
<reference key="1">
    <citation type="journal article" date="2006" name="Proc. Natl. Acad. Sci. U.S.A.">
        <title>Comparative genomics of the lactic acid bacteria.</title>
        <authorList>
            <person name="Makarova K.S."/>
            <person name="Slesarev A."/>
            <person name="Wolf Y.I."/>
            <person name="Sorokin A."/>
            <person name="Mirkin B."/>
            <person name="Koonin E.V."/>
            <person name="Pavlov A."/>
            <person name="Pavlova N."/>
            <person name="Karamychev V."/>
            <person name="Polouchine N."/>
            <person name="Shakhova V."/>
            <person name="Grigoriev I."/>
            <person name="Lou Y."/>
            <person name="Rohksar D."/>
            <person name="Lucas S."/>
            <person name="Huang K."/>
            <person name="Goodstein D.M."/>
            <person name="Hawkins T."/>
            <person name="Plengvidhya V."/>
            <person name="Welker D."/>
            <person name="Hughes J."/>
            <person name="Goh Y."/>
            <person name="Benson A."/>
            <person name="Baldwin K."/>
            <person name="Lee J.-H."/>
            <person name="Diaz-Muniz I."/>
            <person name="Dosti B."/>
            <person name="Smeianov V."/>
            <person name="Wechter W."/>
            <person name="Barabote R."/>
            <person name="Lorca G."/>
            <person name="Altermann E."/>
            <person name="Barrangou R."/>
            <person name="Ganesan B."/>
            <person name="Xie Y."/>
            <person name="Rawsthorne H."/>
            <person name="Tamir D."/>
            <person name="Parker C."/>
            <person name="Breidt F."/>
            <person name="Broadbent J.R."/>
            <person name="Hutkins R."/>
            <person name="O'Sullivan D."/>
            <person name="Steele J."/>
            <person name="Unlu G."/>
            <person name="Saier M.H. Jr."/>
            <person name="Klaenhammer T."/>
            <person name="Richardson P."/>
            <person name="Kozyavkin S."/>
            <person name="Weimer B.C."/>
            <person name="Mills D.A."/>
        </authorList>
    </citation>
    <scope>NUCLEOTIDE SEQUENCE [LARGE SCALE GENOMIC DNA]</scope>
    <source>
        <strain>ATCC 367 / BCRC 12310 / CIP 105137 / JCM 1170 / LMG 11437 / NCIMB 947 / NCTC 947</strain>
    </source>
</reference>